<feature type="initiator methionine" description="Removed" evidence="1">
    <location>
        <position position="1"/>
    </location>
</feature>
<feature type="chain" id="PRO_0000428340" description="Uncharacterized response regulatory protein MT3230">
    <location>
        <begin position="2"/>
        <end position="133"/>
    </location>
</feature>
<feature type="domain" description="Response regulatory" evidence="2">
    <location>
        <begin position="9"/>
        <end position="128"/>
    </location>
</feature>
<feature type="modified residue" description="4-aspartylphosphate" evidence="2">
    <location>
        <position position="64"/>
    </location>
</feature>
<accession>P9WGL6</accession>
<accession>L0TEN7</accession>
<accession>P95183</accession>
<accession>Q7D616</accession>
<name>Y3143_MYCTO</name>
<sequence>MPDSSTALRILVYSDNVQTRERVMRALGKRLHPDLPDLTYVEVATGPMVIRQMDRGGIDLAILDGEATPTGGMGIAKQLKDELASCPPILVLTGRPDDTWLASWSRAEAAVPHPVDPIVLGRTVLSLLRAPAH</sequence>
<dbReference type="EMBL" id="AE000516">
    <property type="protein sequence ID" value="AAK47570.1"/>
    <property type="molecule type" value="Genomic_DNA"/>
</dbReference>
<dbReference type="PIR" id="H70646">
    <property type="entry name" value="H70646"/>
</dbReference>
<dbReference type="RefSeq" id="WP_003416410.1">
    <property type="nucleotide sequence ID" value="NZ_KK341227.1"/>
</dbReference>
<dbReference type="SMR" id="P9WGL6"/>
<dbReference type="KEGG" id="mtc:MT3230"/>
<dbReference type="PATRIC" id="fig|83331.31.peg.3479"/>
<dbReference type="HOGENOM" id="CLU_127113_0_0_11"/>
<dbReference type="Proteomes" id="UP000001020">
    <property type="component" value="Chromosome"/>
</dbReference>
<dbReference type="GO" id="GO:0000160">
    <property type="term" value="P:phosphorelay signal transduction system"/>
    <property type="evidence" value="ECO:0007669"/>
    <property type="project" value="UniProtKB-KW"/>
</dbReference>
<dbReference type="Gene3D" id="3.40.50.2300">
    <property type="match status" value="1"/>
</dbReference>
<dbReference type="InterPro" id="IPR011006">
    <property type="entry name" value="CheY-like_superfamily"/>
</dbReference>
<dbReference type="InterPro" id="IPR001789">
    <property type="entry name" value="Sig_transdc_resp-reg_receiver"/>
</dbReference>
<dbReference type="SMART" id="SM00448">
    <property type="entry name" value="REC"/>
    <property type="match status" value="1"/>
</dbReference>
<dbReference type="SUPFAM" id="SSF52172">
    <property type="entry name" value="CheY-like"/>
    <property type="match status" value="1"/>
</dbReference>
<dbReference type="PROSITE" id="PS50110">
    <property type="entry name" value="RESPONSE_REGULATORY"/>
    <property type="match status" value="1"/>
</dbReference>
<evidence type="ECO:0000250" key="1"/>
<evidence type="ECO:0000255" key="2">
    <source>
        <dbReference type="PROSITE-ProRule" id="PRU00169"/>
    </source>
</evidence>
<proteinExistence type="inferred from homology"/>
<gene>
    <name type="ordered locus">MT3230</name>
</gene>
<reference key="1">
    <citation type="journal article" date="2002" name="J. Bacteriol.">
        <title>Whole-genome comparison of Mycobacterium tuberculosis clinical and laboratory strains.</title>
        <authorList>
            <person name="Fleischmann R.D."/>
            <person name="Alland D."/>
            <person name="Eisen J.A."/>
            <person name="Carpenter L."/>
            <person name="White O."/>
            <person name="Peterson J.D."/>
            <person name="DeBoy R.T."/>
            <person name="Dodson R.J."/>
            <person name="Gwinn M.L."/>
            <person name="Haft D.H."/>
            <person name="Hickey E.K."/>
            <person name="Kolonay J.F."/>
            <person name="Nelson W.C."/>
            <person name="Umayam L.A."/>
            <person name="Ermolaeva M.D."/>
            <person name="Salzberg S.L."/>
            <person name="Delcher A."/>
            <person name="Utterback T.R."/>
            <person name="Weidman J.F."/>
            <person name="Khouri H.M."/>
            <person name="Gill J."/>
            <person name="Mikula A."/>
            <person name="Bishai W."/>
            <person name="Jacobs W.R. Jr."/>
            <person name="Venter J.C."/>
            <person name="Fraser C.M."/>
        </authorList>
    </citation>
    <scope>NUCLEOTIDE SEQUENCE [LARGE SCALE GENOMIC DNA]</scope>
    <source>
        <strain>CDC 1551 / Oshkosh</strain>
    </source>
</reference>
<protein>
    <recommendedName>
        <fullName>Uncharacterized response regulatory protein MT3230</fullName>
    </recommendedName>
</protein>
<keyword id="KW-0597">Phosphoprotein</keyword>
<keyword id="KW-1185">Reference proteome</keyword>
<keyword id="KW-0902">Two-component regulatory system</keyword>
<organism>
    <name type="scientific">Mycobacterium tuberculosis (strain CDC 1551 / Oshkosh)</name>
    <dbReference type="NCBI Taxonomy" id="83331"/>
    <lineage>
        <taxon>Bacteria</taxon>
        <taxon>Bacillati</taxon>
        <taxon>Actinomycetota</taxon>
        <taxon>Actinomycetes</taxon>
        <taxon>Mycobacteriales</taxon>
        <taxon>Mycobacteriaceae</taxon>
        <taxon>Mycobacterium</taxon>
        <taxon>Mycobacterium tuberculosis complex</taxon>
    </lineage>
</organism>